<comment type="function">
    <text>May be involved in the transport of sugars. May have a role in chemotaxis.</text>
</comment>
<comment type="subcellular location">
    <subcellularLocation>
        <location evidence="2">Cell membrane</location>
        <topology evidence="2">Lipid-anchor</topology>
    </subcellularLocation>
</comment>
<comment type="similarity">
    <text evidence="2">Belongs to the bacterial solute-binding protein 2 family.</text>
</comment>
<proteinExistence type="evidence at protein level"/>
<accession>Q08255</accession>
<gene>
    <name type="primary">mglB</name>
    <name type="synonym">tpp38</name>
    <name type="ordered locus">TP_0684</name>
</gene>
<evidence type="ECO:0000255" key="1">
    <source>
        <dbReference type="PROSITE-ProRule" id="PRU00303"/>
    </source>
</evidence>
<evidence type="ECO:0000305" key="2"/>
<evidence type="ECO:0007829" key="3">
    <source>
        <dbReference type="PDB" id="6BGD"/>
    </source>
</evidence>
<keyword id="KW-0002">3D-structure</keyword>
<keyword id="KW-1003">Cell membrane</keyword>
<keyword id="KW-0449">Lipoprotein</keyword>
<keyword id="KW-0472">Membrane</keyword>
<keyword id="KW-0564">Palmitate</keyword>
<keyword id="KW-1185">Reference proteome</keyword>
<keyword id="KW-0732">Signal</keyword>
<keyword id="KW-0762">Sugar transport</keyword>
<keyword id="KW-0813">Transport</keyword>
<reference key="1">
    <citation type="journal article" date="1994" name="Infect. Immun.">
        <title>Similarity between the 38-kilodalton lipoprotein of Treponema pallidum and the glucose/galactose-binding (MglB) protein of Escherichia coli.</title>
        <authorList>
            <person name="Becker P.S."/>
            <person name="Akins D.R."/>
            <person name="Radolf J.D."/>
            <person name="Norgard M.V."/>
        </authorList>
    </citation>
    <scope>NUCLEOTIDE SEQUENCE [GENOMIC DNA]</scope>
    <source>
        <strain>Nichols</strain>
    </source>
</reference>
<reference key="2">
    <citation type="journal article" date="1996" name="Gene">
        <title>A mgl-like operon in Treponema pallidum, the syphilis spirochete.</title>
        <authorList>
            <person name="Porcella S.F."/>
            <person name="Popova T.G."/>
            <person name="Hagman K.E."/>
            <person name="Penn C.W."/>
            <person name="Radolf J.D."/>
            <person name="Norgard M.V."/>
        </authorList>
    </citation>
    <scope>NUCLEOTIDE SEQUENCE [GENOMIC DNA]</scope>
    <source>
        <strain>Nichols</strain>
    </source>
</reference>
<reference key="3">
    <citation type="journal article" date="1998" name="Science">
        <title>Complete genome sequence of Treponema pallidum, the syphilis spirochete.</title>
        <authorList>
            <person name="Fraser C.M."/>
            <person name="Norris S.J."/>
            <person name="Weinstock G.M."/>
            <person name="White O."/>
            <person name="Sutton G.G."/>
            <person name="Dodson R.J."/>
            <person name="Gwinn M.L."/>
            <person name="Hickey E.K."/>
            <person name="Clayton R.A."/>
            <person name="Ketchum K.A."/>
            <person name="Sodergren E."/>
            <person name="Hardham J.M."/>
            <person name="McLeod M.P."/>
            <person name="Salzberg S.L."/>
            <person name="Peterson J.D."/>
            <person name="Khalak H.G."/>
            <person name="Richardson D.L."/>
            <person name="Howell J.K."/>
            <person name="Chidambaram M."/>
            <person name="Utterback T.R."/>
            <person name="McDonald L.A."/>
            <person name="Artiach P."/>
            <person name="Bowman C."/>
            <person name="Cotton M.D."/>
            <person name="Fujii C."/>
            <person name="Garland S.A."/>
            <person name="Hatch B."/>
            <person name="Horst K."/>
            <person name="Roberts K.M."/>
            <person name="Sandusky M."/>
            <person name="Weidman J.F."/>
            <person name="Smith H.O."/>
            <person name="Venter J.C."/>
        </authorList>
    </citation>
    <scope>NUCLEOTIDE SEQUENCE [LARGE SCALE GENOMIC DNA]</scope>
    <source>
        <strain>Nichols</strain>
    </source>
</reference>
<protein>
    <recommendedName>
        <fullName>Glucose/galactose-binding lipoprotein</fullName>
    </recommendedName>
</protein>
<name>MGLB_TREPA</name>
<sequence>MKENSCTACSRRLALFVGAAVLVVGCSSKTDVTLNRDKPLVFFNRQPSDPLTGKVDMAAMNWNDKTYYVGFDAKFGGSIQGKMILDFLASSESSVDRNGDGIIGYVLCIGDVGHNDSKVRTEGIRRALGTWTGSSDPGQAKEGQAVVGGKSYKVVELEGKAMTGTDGSTWNTNSATESMGSWVAKFADKIDLVISNNDGMAMGCLQASNYPRGLPIFGYDANADAVESVGKGELTGTVSQNVDAQAVAVLQIIRNLLDGSSGEDVVANGISRPDAHGNKISAPVQYWEDVKAIMADNSEVTSANWKEYTRGARDAGVRQVSAPTKKVLLTVHNASNDFLASAYLPALKHYAPLLNVDLTVVQGDGQNELSCLDKFTNLDMFDAFAVNMVKTNSGADYTDKLKY</sequence>
<feature type="signal peptide" evidence="1">
    <location>
        <begin position="1"/>
        <end position="25"/>
    </location>
</feature>
<feature type="chain" id="PRO_0000031743" description="Glucose/galactose-binding lipoprotein">
    <location>
        <begin position="26"/>
        <end position="403"/>
    </location>
</feature>
<feature type="lipid moiety-binding region" description="N-palmitoyl cysteine" evidence="2">
    <location>
        <position position="26"/>
    </location>
</feature>
<feature type="lipid moiety-binding region" description="S-diacylglycerol cysteine" evidence="2">
    <location>
        <position position="26"/>
    </location>
</feature>
<feature type="strand" evidence="3">
    <location>
        <begin position="40"/>
        <end position="45"/>
    </location>
</feature>
<feature type="turn" evidence="3">
    <location>
        <begin position="50"/>
        <end position="52"/>
    </location>
</feature>
<feature type="helix" evidence="3">
    <location>
        <begin position="57"/>
        <end position="60"/>
    </location>
</feature>
<feature type="strand" evidence="3">
    <location>
        <begin position="66"/>
        <end position="71"/>
    </location>
</feature>
<feature type="helix" evidence="3">
    <location>
        <begin position="73"/>
        <end position="75"/>
    </location>
</feature>
<feature type="helix" evidence="3">
    <location>
        <begin position="76"/>
        <end position="90"/>
    </location>
</feature>
<feature type="helix" evidence="3">
    <location>
        <begin position="93"/>
        <end position="95"/>
    </location>
</feature>
<feature type="strand" evidence="3">
    <location>
        <begin position="100"/>
        <end position="109"/>
    </location>
</feature>
<feature type="helix" evidence="3">
    <location>
        <begin position="115"/>
        <end position="127"/>
    </location>
</feature>
<feature type="strand" evidence="3">
    <location>
        <begin position="143"/>
        <end position="147"/>
    </location>
</feature>
<feature type="strand" evidence="3">
    <location>
        <begin position="150"/>
        <end position="161"/>
    </location>
</feature>
<feature type="helix" evidence="3">
    <location>
        <begin position="172"/>
        <end position="186"/>
    </location>
</feature>
<feature type="helix" evidence="3">
    <location>
        <begin position="187"/>
        <end position="189"/>
    </location>
</feature>
<feature type="strand" evidence="3">
    <location>
        <begin position="192"/>
        <end position="197"/>
    </location>
</feature>
<feature type="helix" evidence="3">
    <location>
        <begin position="198"/>
        <end position="205"/>
    </location>
</feature>
<feature type="helix" evidence="3">
    <location>
        <begin position="223"/>
        <end position="230"/>
    </location>
</feature>
<feature type="strand" evidence="3">
    <location>
        <begin position="236"/>
        <end position="239"/>
    </location>
</feature>
<feature type="helix" evidence="3">
    <location>
        <begin position="242"/>
        <end position="257"/>
    </location>
</feature>
<feature type="helix" evidence="3">
    <location>
        <begin position="263"/>
        <end position="267"/>
    </location>
</feature>
<feature type="turn" evidence="3">
    <location>
        <begin position="268"/>
        <end position="270"/>
    </location>
</feature>
<feature type="strand" evidence="3">
    <location>
        <begin position="284"/>
        <end position="287"/>
    </location>
</feature>
<feature type="helix" evidence="3">
    <location>
        <begin position="288"/>
        <end position="290"/>
    </location>
</feature>
<feature type="strand" evidence="3">
    <location>
        <begin position="292"/>
        <end position="295"/>
    </location>
</feature>
<feature type="strand" evidence="3">
    <location>
        <begin position="298"/>
        <end position="300"/>
    </location>
</feature>
<feature type="turn" evidence="3">
    <location>
        <begin position="302"/>
        <end position="304"/>
    </location>
</feature>
<feature type="helix" evidence="3">
    <location>
        <begin position="305"/>
        <end position="307"/>
    </location>
</feature>
<feature type="strand" evidence="3">
    <location>
        <begin position="325"/>
        <end position="333"/>
    </location>
</feature>
<feature type="helix" evidence="3">
    <location>
        <begin position="337"/>
        <end position="341"/>
    </location>
</feature>
<feature type="helix" evidence="3">
    <location>
        <begin position="343"/>
        <end position="353"/>
    </location>
</feature>
<feature type="strand" evidence="3">
    <location>
        <begin position="356"/>
        <end position="362"/>
    </location>
</feature>
<feature type="strand" evidence="3">
    <location>
        <begin position="364"/>
        <end position="366"/>
    </location>
</feature>
<feature type="helix" evidence="3">
    <location>
        <begin position="368"/>
        <end position="372"/>
    </location>
</feature>
<feature type="helix" evidence="3">
    <location>
        <begin position="378"/>
        <end position="380"/>
    </location>
</feature>
<feature type="strand" evidence="3">
    <location>
        <begin position="382"/>
        <end position="386"/>
    </location>
</feature>
<feature type="helix" evidence="3">
    <location>
        <begin position="394"/>
        <end position="398"/>
    </location>
</feature>
<feature type="helix" evidence="3">
    <location>
        <begin position="399"/>
        <end position="401"/>
    </location>
</feature>
<organism>
    <name type="scientific">Treponema pallidum (strain Nichols)</name>
    <dbReference type="NCBI Taxonomy" id="243276"/>
    <lineage>
        <taxon>Bacteria</taxon>
        <taxon>Pseudomonadati</taxon>
        <taxon>Spirochaetota</taxon>
        <taxon>Spirochaetia</taxon>
        <taxon>Spirochaetales</taxon>
        <taxon>Treponemataceae</taxon>
        <taxon>Treponema</taxon>
    </lineage>
</organism>
<dbReference type="EMBL" id="L20301">
    <property type="protein sequence ID" value="AAA27473.1"/>
    <property type="molecule type" value="Genomic_DNA"/>
</dbReference>
<dbReference type="EMBL" id="U48416">
    <property type="protein sequence ID" value="AAC44584.1"/>
    <property type="molecule type" value="Genomic_DNA"/>
</dbReference>
<dbReference type="EMBL" id="AE000520">
    <property type="protein sequence ID" value="AAC65647.1"/>
    <property type="molecule type" value="Genomic_DNA"/>
</dbReference>
<dbReference type="PIR" id="JC5171">
    <property type="entry name" value="JC5171"/>
</dbReference>
<dbReference type="RefSeq" id="WP_010882129.1">
    <property type="nucleotide sequence ID" value="NC_021490.2"/>
</dbReference>
<dbReference type="PDB" id="5JX2">
    <property type="method" value="X-ray"/>
    <property type="resolution" value="2.05 A"/>
    <property type="chains" value="A=36-403"/>
</dbReference>
<dbReference type="PDB" id="6BGC">
    <property type="method" value="X-ray"/>
    <property type="resolution" value="2.08 A"/>
    <property type="chains" value="A/B=36-403"/>
</dbReference>
<dbReference type="PDB" id="6BGD">
    <property type="method" value="X-ray"/>
    <property type="resolution" value="1.47 A"/>
    <property type="chains" value="A=36-403"/>
</dbReference>
<dbReference type="PDBsum" id="5JX2"/>
<dbReference type="PDBsum" id="6BGC"/>
<dbReference type="PDBsum" id="6BGD"/>
<dbReference type="SMR" id="Q08255"/>
<dbReference type="IntAct" id="Q08255">
    <property type="interactions" value="15"/>
</dbReference>
<dbReference type="STRING" id="243276.TP_0684"/>
<dbReference type="EnsemblBacteria" id="AAC65647">
    <property type="protein sequence ID" value="AAC65647"/>
    <property type="gene ID" value="TP_0684"/>
</dbReference>
<dbReference type="KEGG" id="tpa:TP_0684"/>
<dbReference type="KEGG" id="tpw:TPANIC_0684"/>
<dbReference type="eggNOG" id="COG1879">
    <property type="taxonomic scope" value="Bacteria"/>
</dbReference>
<dbReference type="HOGENOM" id="CLU_057130_0_0_12"/>
<dbReference type="OrthoDB" id="9769193at2"/>
<dbReference type="Proteomes" id="UP000000811">
    <property type="component" value="Chromosome"/>
</dbReference>
<dbReference type="GO" id="GO:0030288">
    <property type="term" value="C:outer membrane-bounded periplasmic space"/>
    <property type="evidence" value="ECO:0007669"/>
    <property type="project" value="TreeGrafter"/>
</dbReference>
<dbReference type="GO" id="GO:0005886">
    <property type="term" value="C:plasma membrane"/>
    <property type="evidence" value="ECO:0007669"/>
    <property type="project" value="UniProtKB-SubCell"/>
</dbReference>
<dbReference type="GO" id="GO:0030246">
    <property type="term" value="F:carbohydrate binding"/>
    <property type="evidence" value="ECO:0007669"/>
    <property type="project" value="TreeGrafter"/>
</dbReference>
<dbReference type="Gene3D" id="3.40.50.2300">
    <property type="match status" value="1"/>
</dbReference>
<dbReference type="InterPro" id="IPR050555">
    <property type="entry name" value="Bact_Solute-Bind_Prot2"/>
</dbReference>
<dbReference type="InterPro" id="IPR040740">
    <property type="entry name" value="MglB-2_Peripla_BP"/>
</dbReference>
<dbReference type="InterPro" id="IPR028082">
    <property type="entry name" value="Peripla_BP_I"/>
</dbReference>
<dbReference type="InterPro" id="IPR025997">
    <property type="entry name" value="SBP_2_dom"/>
</dbReference>
<dbReference type="PANTHER" id="PTHR30036:SF2">
    <property type="entry name" value="D-GALACTOSE_METHYL-GALACTOSIDE BINDING PERIPLASMIC PROTEIN MGLB"/>
    <property type="match status" value="1"/>
</dbReference>
<dbReference type="PANTHER" id="PTHR30036">
    <property type="entry name" value="D-XYLOSE-BINDING PERIPLASMIC PROTEIN"/>
    <property type="match status" value="1"/>
</dbReference>
<dbReference type="Pfam" id="PF13407">
    <property type="entry name" value="Peripla_BP_4"/>
    <property type="match status" value="1"/>
</dbReference>
<dbReference type="Pfam" id="PF18610">
    <property type="entry name" value="Peripla_BP_7"/>
    <property type="match status" value="1"/>
</dbReference>
<dbReference type="SUPFAM" id="SSF53822">
    <property type="entry name" value="Periplasmic binding protein-like I"/>
    <property type="match status" value="1"/>
</dbReference>
<dbReference type="PROSITE" id="PS51257">
    <property type="entry name" value="PROKAR_LIPOPROTEIN"/>
    <property type="match status" value="1"/>
</dbReference>